<accession>Q9JJL0</accession>
<accession>C4IXT6</accession>
<name>TSGA8_MOUSE</name>
<proteinExistence type="evidence at protein level"/>
<reference evidence="6" key="1">
    <citation type="journal article" date="2000" name="Biol. Reprod.">
        <title>Cloning and characterization of a complementary deoxyribonucleic acid encoding haploid-specific alanine-rich acidic protein located on chromosome-X.</title>
        <authorList>
            <person name="Uchida K."/>
            <person name="Tsuchida J."/>
            <person name="Tanaka H."/>
            <person name="Koga M."/>
            <person name="Nishina Y."/>
            <person name="Nozaki M."/>
            <person name="Yoshinaga K."/>
            <person name="Toshimori K."/>
            <person name="Matsumiya K."/>
            <person name="Okuyama A."/>
            <person name="Nishimune Y."/>
        </authorList>
    </citation>
    <scope>NUCLEOTIDE SEQUENCE [MRNA]</scope>
    <scope>SUBCELLULAR LOCATION</scope>
    <scope>TISSUE SPECIFICITY</scope>
    <scope>DEVELOPMENTAL STAGE</scope>
    <source>
        <strain evidence="6">C57BL/6J</strain>
        <tissue evidence="6">Testis</tissue>
    </source>
</reference>
<reference evidence="8" key="2">
    <citation type="journal article" date="2009" name="PLoS Biol.">
        <title>Lineage-specific biology revealed by a finished genome assembly of the mouse.</title>
        <authorList>
            <person name="Church D.M."/>
            <person name="Goodstadt L."/>
            <person name="Hillier L.W."/>
            <person name="Zody M.C."/>
            <person name="Goldstein S."/>
            <person name="She X."/>
            <person name="Bult C.J."/>
            <person name="Agarwala R."/>
            <person name="Cherry J.L."/>
            <person name="DiCuccio M."/>
            <person name="Hlavina W."/>
            <person name="Kapustin Y."/>
            <person name="Meric P."/>
            <person name="Maglott D."/>
            <person name="Birtle Z."/>
            <person name="Marques A.C."/>
            <person name="Graves T."/>
            <person name="Zhou S."/>
            <person name="Teague B."/>
            <person name="Potamousis K."/>
            <person name="Churas C."/>
            <person name="Place M."/>
            <person name="Herschleb J."/>
            <person name="Runnheim R."/>
            <person name="Forrest D."/>
            <person name="Amos-Landgraf J."/>
            <person name="Schwartz D.C."/>
            <person name="Cheng Z."/>
            <person name="Lindblad-Toh K."/>
            <person name="Eichler E.E."/>
            <person name="Ponting C.P."/>
        </authorList>
    </citation>
    <scope>NUCLEOTIDE SEQUENCE [LARGE SCALE GENOMIC DNA]</scope>
    <source>
        <strain evidence="8">C57BL/6J</strain>
    </source>
</reference>
<reference evidence="5" key="3">
    <citation type="journal article" date="2004" name="Genome Res.">
        <title>The status, quality, and expansion of the NIH full-length cDNA project: the Mammalian Gene Collection (MGC).</title>
        <authorList>
            <consortium name="The MGC Project Team"/>
        </authorList>
    </citation>
    <scope>NUCLEOTIDE SEQUENCE [LARGE SCALE MRNA]</scope>
    <source>
        <tissue evidence="5">Testis</tissue>
    </source>
</reference>
<reference key="4">
    <citation type="journal article" date="2010" name="Cell">
        <title>A tissue-specific atlas of mouse protein phosphorylation and expression.</title>
        <authorList>
            <person name="Huttlin E.L."/>
            <person name="Jedrychowski M.P."/>
            <person name="Elias J.E."/>
            <person name="Goswami T."/>
            <person name="Rad R."/>
            <person name="Beausoleil S.A."/>
            <person name="Villen J."/>
            <person name="Haas W."/>
            <person name="Sowa M.E."/>
            <person name="Gygi S.P."/>
        </authorList>
    </citation>
    <scope>IDENTIFICATION BY MASS SPECTROMETRY [LARGE SCALE ANALYSIS]</scope>
    <source>
        <tissue>Testis</tissue>
    </source>
</reference>
<sequence>MDVPTSSTDSQEVKPIMPIRTKAACKFYPPHILCGKGAKTNKRGKRGGAQKASTKKDIGETTPPVAKKSKVAKEPTMLAAAAAPEAAASPESSAAAAAPEAAASPESSAAAAAPEAAASPESSAAAAAPEAAASLESSAAAAAPEAAAAPATPAAPEAAAAPEVAAAPATPAAPEATAAPAAPEAATTPAAPEAPAAAPAVEEEEMVWEAAAVVGEAAVKPPEEEPTSGEAVATTTMT</sequence>
<comment type="subcellular location">
    <subcellularLocation>
        <location evidence="2">Cytoplasm</location>
    </subcellularLocation>
    <subcellularLocation>
        <location evidence="2">Nucleus</location>
        <location evidence="2">Nucleoplasm</location>
    </subcellularLocation>
    <text evidence="2">Strongly expressed in the nucleus of round spermatids. As spermatids mature, nuclear expression declines and cytoplasmic expression increases. Elongating spermatids have mainly cytoplasmic expression.</text>
</comment>
<comment type="tissue specificity">
    <text evidence="2">Specifically expressed in testis (at protein level).</text>
</comment>
<comment type="developmental stage">
    <text evidence="2">Detected in testis from 18 days onwards. In developing spermatazoa, expressed from the round spermatid stage through to the terminal stages of spermiogenesis, when expression declines.</text>
</comment>
<comment type="sequence caution" evidence="4">
    <conflict type="erroneous initiation">
        <sequence resource="EMBL-CDS" id="AAI39063"/>
    </conflict>
    <text>Extended N-terminus.</text>
</comment>
<organism evidence="6">
    <name type="scientific">Mus musculus</name>
    <name type="common">Mouse</name>
    <dbReference type="NCBI Taxonomy" id="10090"/>
    <lineage>
        <taxon>Eukaryota</taxon>
        <taxon>Metazoa</taxon>
        <taxon>Chordata</taxon>
        <taxon>Craniata</taxon>
        <taxon>Vertebrata</taxon>
        <taxon>Euteleostomi</taxon>
        <taxon>Mammalia</taxon>
        <taxon>Eutheria</taxon>
        <taxon>Euarchontoglires</taxon>
        <taxon>Glires</taxon>
        <taxon>Rodentia</taxon>
        <taxon>Myomorpha</taxon>
        <taxon>Muroidea</taxon>
        <taxon>Muridae</taxon>
        <taxon>Murinae</taxon>
        <taxon>Mus</taxon>
        <taxon>Mus</taxon>
    </lineage>
</organism>
<keyword id="KW-0963">Cytoplasm</keyword>
<keyword id="KW-0539">Nucleus</keyword>
<keyword id="KW-1185">Reference proteome</keyword>
<keyword id="KW-0677">Repeat</keyword>
<feature type="chain" id="PRO_0000439814" description="Testis-specific gene A8 protein">
    <location>
        <begin position="1"/>
        <end position="238"/>
    </location>
</feature>
<feature type="repeat" description="1-1">
    <location>
        <begin position="79"/>
        <end position="93"/>
    </location>
</feature>
<feature type="repeat" description="1-2">
    <location>
        <begin position="94"/>
        <end position="108"/>
    </location>
</feature>
<feature type="repeat" description="1-3">
    <location>
        <begin position="109"/>
        <end position="123"/>
    </location>
</feature>
<feature type="repeat" description="1-4">
    <location>
        <begin position="124"/>
        <end position="138"/>
    </location>
</feature>
<feature type="repeat" description="2-1">
    <location>
        <begin position="153"/>
        <end position="158"/>
    </location>
</feature>
<feature type="repeat" description="2-2">
    <location>
        <begin position="171"/>
        <end position="176"/>
    </location>
</feature>
<feature type="repeat" description="2-3">
    <location>
        <begin position="180"/>
        <end position="185"/>
    </location>
</feature>
<feature type="repeat" description="2-4">
    <location>
        <begin position="189"/>
        <end position="194"/>
    </location>
</feature>
<feature type="region of interest" description="Disordered" evidence="1">
    <location>
        <begin position="35"/>
        <end position="238"/>
    </location>
</feature>
<feature type="region of interest" description="4 X 15 AA tandem repeats of A-A-A-A-A-P-E-A-A-A-S-[PL]-E-S-S" evidence="4">
    <location>
        <begin position="79"/>
        <end position="148"/>
    </location>
</feature>
<feature type="region of interest" description="4 X 6 AA repeats of P-A-A-P-E-A" evidence="4">
    <location>
        <begin position="153"/>
        <end position="194"/>
    </location>
</feature>
<feature type="compositionally biased region" description="Basic residues" evidence="1">
    <location>
        <begin position="39"/>
        <end position="48"/>
    </location>
</feature>
<feature type="compositionally biased region" description="Low complexity" evidence="1">
    <location>
        <begin position="79"/>
        <end position="200"/>
    </location>
</feature>
<feature type="compositionally biased region" description="Low complexity" evidence="1">
    <location>
        <begin position="208"/>
        <end position="220"/>
    </location>
</feature>
<gene>
    <name evidence="7" type="primary">Tsga8</name>
    <name evidence="3 7" type="synonym">Halapx</name>
</gene>
<evidence type="ECO:0000256" key="1">
    <source>
        <dbReference type="SAM" id="MobiDB-lite"/>
    </source>
</evidence>
<evidence type="ECO:0000269" key="2">
    <source>
    </source>
</evidence>
<evidence type="ECO:0000303" key="3">
    <source>
    </source>
</evidence>
<evidence type="ECO:0000305" key="4"/>
<evidence type="ECO:0000312" key="5">
    <source>
        <dbReference type="EMBL" id="AAI39063.1"/>
    </source>
</evidence>
<evidence type="ECO:0000312" key="6">
    <source>
        <dbReference type="EMBL" id="BAA96418.1"/>
    </source>
</evidence>
<evidence type="ECO:0000312" key="7">
    <source>
        <dbReference type="MGI" id="MGI:1194903"/>
    </source>
</evidence>
<evidence type="ECO:0000312" key="8">
    <source>
        <dbReference type="Proteomes" id="UP000000589"/>
    </source>
</evidence>
<dbReference type="EMBL" id="AB032764">
    <property type="protein sequence ID" value="BAA96418.1"/>
    <property type="molecule type" value="mRNA"/>
</dbReference>
<dbReference type="EMBL" id="CR382328">
    <property type="status" value="NOT_ANNOTATED_CDS"/>
    <property type="molecule type" value="Genomic_DNA"/>
</dbReference>
<dbReference type="EMBL" id="BC139062">
    <property type="protein sequence ID" value="AAI39063.1"/>
    <property type="status" value="ALT_INIT"/>
    <property type="molecule type" value="mRNA"/>
</dbReference>
<dbReference type="CCDS" id="CCDS53124.1"/>
<dbReference type="RefSeq" id="NP_068698.1">
    <property type="nucleotide sequence ID" value="NM_021898.2"/>
</dbReference>
<dbReference type="FunCoup" id="Q9JJL0">
    <property type="interactions" value="739"/>
</dbReference>
<dbReference type="STRING" id="10090.ENSMUSP00000043015"/>
<dbReference type="GlyGen" id="Q9JJL0">
    <property type="glycosylation" value="3 sites"/>
</dbReference>
<dbReference type="SwissPalm" id="Q9JJL0"/>
<dbReference type="PaxDb" id="10090-ENSMUSP00000043015"/>
<dbReference type="ProteomicsDB" id="297660"/>
<dbReference type="Ensembl" id="ENSMUST00000049420.4">
    <property type="protein sequence ID" value="ENSMUSP00000043015.4"/>
    <property type="gene ID" value="ENSMUSG00000035522.4"/>
</dbReference>
<dbReference type="GeneID" id="100502723"/>
<dbReference type="KEGG" id="mmu:100502723"/>
<dbReference type="UCSC" id="uc009trk.2">
    <property type="organism name" value="mouse"/>
</dbReference>
<dbReference type="AGR" id="MGI:1194903"/>
<dbReference type="CTD" id="100502723"/>
<dbReference type="MGI" id="MGI:1194903">
    <property type="gene designation" value="Tsga8"/>
</dbReference>
<dbReference type="VEuPathDB" id="HostDB:ENSMUSG00000035522"/>
<dbReference type="GeneTree" id="ENSGT00720000109445"/>
<dbReference type="HOGENOM" id="CLU_1165508_0_0_1"/>
<dbReference type="InParanoid" id="Q9JJL0"/>
<dbReference type="OMA" id="IMPIRTK"/>
<dbReference type="OrthoDB" id="9635113at2759"/>
<dbReference type="BioGRID-ORCS" id="100502723">
    <property type="hits" value="2 hits in 74 CRISPR screens"/>
</dbReference>
<dbReference type="PRO" id="PR:Q9JJL0"/>
<dbReference type="Proteomes" id="UP000000589">
    <property type="component" value="Chromosome X"/>
</dbReference>
<dbReference type="RNAct" id="Q9JJL0">
    <property type="molecule type" value="protein"/>
</dbReference>
<dbReference type="Bgee" id="ENSMUSG00000035522">
    <property type="expression patterns" value="Expressed in seminiferous tubule of testis and 11 other cell types or tissues"/>
</dbReference>
<dbReference type="GO" id="GO:0005737">
    <property type="term" value="C:cytoplasm"/>
    <property type="evidence" value="ECO:0000314"/>
    <property type="project" value="MGI"/>
</dbReference>
<dbReference type="GO" id="GO:0001673">
    <property type="term" value="C:male germ cell nucleus"/>
    <property type="evidence" value="ECO:0000314"/>
    <property type="project" value="MGI"/>
</dbReference>
<dbReference type="GO" id="GO:0005654">
    <property type="term" value="C:nucleoplasm"/>
    <property type="evidence" value="ECO:0007669"/>
    <property type="project" value="UniProtKB-SubCell"/>
</dbReference>
<dbReference type="GO" id="GO:0005634">
    <property type="term" value="C:nucleus"/>
    <property type="evidence" value="ECO:0000314"/>
    <property type="project" value="MGI"/>
</dbReference>
<dbReference type="GO" id="GO:0007286">
    <property type="term" value="P:spermatid development"/>
    <property type="evidence" value="ECO:0000315"/>
    <property type="project" value="MGI"/>
</dbReference>
<dbReference type="GO" id="GO:0007289">
    <property type="term" value="P:spermatid nucleus differentiation"/>
    <property type="evidence" value="ECO:0000315"/>
    <property type="project" value="MGI"/>
</dbReference>
<protein>
    <recommendedName>
        <fullName evidence="7">Testis-specific gene A8 protein</fullName>
    </recommendedName>
    <alternativeName>
        <fullName evidence="3">Haploid-specific alanine-rich acidic protein located on chromosome X</fullName>
        <shortName evidence="3">Halap-x</shortName>
    </alternativeName>
</protein>